<evidence type="ECO:0000250" key="1">
    <source>
        <dbReference type="UniProtKB" id="P20004"/>
    </source>
</evidence>
<evidence type="ECO:0000255" key="2"/>
<evidence type="ECO:0000269" key="3">
    <source>
    </source>
</evidence>
<evidence type="ECO:0000269" key="4">
    <source>
    </source>
</evidence>
<evidence type="ECO:0000269" key="5">
    <source>
    </source>
</evidence>
<evidence type="ECO:0000269" key="6">
    <source>
    </source>
</evidence>
<evidence type="ECO:0000269" key="7">
    <source>
    </source>
</evidence>
<evidence type="ECO:0000305" key="8"/>
<name>ACON2_YEAST</name>
<sequence>MLSSANRFYIKRHLATHANMFPSVSKNFQTKVPPYAKLLTNLDKIKQITNNAPLTLAEKILYSHLCDPEESITSSDLSTIRGNKYLKLNPDRVAMQDASAQMALLQFMTTGLNQTSVPASIHCDHLIVGKDGETKDLPSSIATNQEVFDFLESCAKRYGIQFWGPGSGIIHQIVLENFSAPGLMMLGTDSHTPNAGGLGAIAIGVGGADAVDALTGTPWELKAPKILGVKLTGKLNGWSTPKDVITKLAGLLTVRGGTGYIVEYFGEGVSTLSCTGMATICNMGAEIGATTSTFPYQEAHKRYLQATNRAEVAEAADVALNKFNFLRADKDAQYDKVIEIDLSAIEPHVNGPFTPDLSTPISQYAEKSLKENWPQKVSAGLIGSCTNSSYQDMSRVVDLVKQASKAGLKPRIPFFVTPGSEQIRATLERDGIIDIFQENGAKVLANACGPCIGQWNREDVSKTSKETNTIFTSFNRNFRARNDGNRNTMNFLTSPEIVTAMSYSGDAQFNPLTDSIKLPNGKDFKFQPPKGDELPKRGFEHGRDKFYPEMDPKPDSNVEIKVDPNSDRLQLLEPFKPWNGKELKTNVLLKVEGKCTTDHISAAGVWLKYKGHLENISYNTLIGAQNKETGEVNKAYDLDGTEYDIPGLMMKWKSDGRPWTVIAEHNYGEGSAREHAALSPRFLGGEILLVKSFARIHETNLKKQGVLPLTFANESDYDKISSGDVLETLNLVDMIAKDGNNGGEIDVKITKPNGESFTIKAKHTMSKDQIDFFKAGSAINYIGNIRRNE</sequence>
<dbReference type="EC" id="4.2.1.-"/>
<dbReference type="EMBL" id="X77688">
    <property type="protein sequence ID" value="CAA54757.1"/>
    <property type="molecule type" value="Genomic_DNA"/>
</dbReference>
<dbReference type="EMBL" id="Z49475">
    <property type="protein sequence ID" value="CAA89495.1"/>
    <property type="molecule type" value="Genomic_DNA"/>
</dbReference>
<dbReference type="EMBL" id="BK006943">
    <property type="protein sequence ID" value="DAA08609.1"/>
    <property type="molecule type" value="Genomic_DNA"/>
</dbReference>
<dbReference type="PIR" id="S46631">
    <property type="entry name" value="S46631"/>
</dbReference>
<dbReference type="RefSeq" id="NP_012335.1">
    <property type="nucleotide sequence ID" value="NM_001181633.1"/>
</dbReference>
<dbReference type="SMR" id="P39533"/>
<dbReference type="BioGRID" id="33557">
    <property type="interactions" value="84"/>
</dbReference>
<dbReference type="DIP" id="DIP-1376N"/>
<dbReference type="FunCoup" id="P39533">
    <property type="interactions" value="367"/>
</dbReference>
<dbReference type="IntAct" id="P39533">
    <property type="interactions" value="10"/>
</dbReference>
<dbReference type="MINT" id="P39533"/>
<dbReference type="STRING" id="4932.YJL200C"/>
<dbReference type="MoonProt" id="P39533"/>
<dbReference type="GlyGen" id="P39533">
    <property type="glycosylation" value="1 site"/>
</dbReference>
<dbReference type="iPTMnet" id="P39533"/>
<dbReference type="PaxDb" id="4932-YJL200C"/>
<dbReference type="PeptideAtlas" id="P39533"/>
<dbReference type="EnsemblFungi" id="YJL200C_mRNA">
    <property type="protein sequence ID" value="YJL200C"/>
    <property type="gene ID" value="YJL200C"/>
</dbReference>
<dbReference type="GeneID" id="853230"/>
<dbReference type="KEGG" id="sce:YJL200C"/>
<dbReference type="AGR" id="SGD:S000003736"/>
<dbReference type="SGD" id="S000003736">
    <property type="gene designation" value="ACO2"/>
</dbReference>
<dbReference type="VEuPathDB" id="FungiDB:YJL200C"/>
<dbReference type="eggNOG" id="KOG0453">
    <property type="taxonomic scope" value="Eukaryota"/>
</dbReference>
<dbReference type="GeneTree" id="ENSGT00960000189203"/>
<dbReference type="HOGENOM" id="CLU_006714_2_2_1"/>
<dbReference type="InParanoid" id="P39533"/>
<dbReference type="OMA" id="KWPETFG"/>
<dbReference type="OrthoDB" id="2224430at2759"/>
<dbReference type="BioCyc" id="YEAST:YJL200C-MONOMER"/>
<dbReference type="UniPathway" id="UPA00033">
    <property type="reaction ID" value="UER00029"/>
</dbReference>
<dbReference type="BioGRID-ORCS" id="853230">
    <property type="hits" value="7 hits in 10 CRISPR screens"/>
</dbReference>
<dbReference type="CD-CODE" id="E03F929F">
    <property type="entry name" value="Stress granule"/>
</dbReference>
<dbReference type="PRO" id="PR:P39533"/>
<dbReference type="Proteomes" id="UP000002311">
    <property type="component" value="Chromosome X"/>
</dbReference>
<dbReference type="RNAct" id="P39533">
    <property type="molecule type" value="protein"/>
</dbReference>
<dbReference type="GO" id="GO:0005829">
    <property type="term" value="C:cytosol"/>
    <property type="evidence" value="ECO:0000318"/>
    <property type="project" value="GO_Central"/>
</dbReference>
<dbReference type="GO" id="GO:0005739">
    <property type="term" value="C:mitochondrion"/>
    <property type="evidence" value="ECO:0007005"/>
    <property type="project" value="SGD"/>
</dbReference>
<dbReference type="GO" id="GO:0051539">
    <property type="term" value="F:4 iron, 4 sulfur cluster binding"/>
    <property type="evidence" value="ECO:0000318"/>
    <property type="project" value="GO_Central"/>
</dbReference>
<dbReference type="GO" id="GO:0003994">
    <property type="term" value="F:aconitate hydratase activity"/>
    <property type="evidence" value="ECO:0000250"/>
    <property type="project" value="SGD"/>
</dbReference>
<dbReference type="GO" id="GO:0046872">
    <property type="term" value="F:metal ion binding"/>
    <property type="evidence" value="ECO:0007669"/>
    <property type="project" value="UniProtKB-KW"/>
</dbReference>
<dbReference type="GO" id="GO:0019878">
    <property type="term" value="P:lysine biosynthetic process via aminoadipic acid"/>
    <property type="evidence" value="ECO:0007669"/>
    <property type="project" value="UniProtKB-UniPathway"/>
</dbReference>
<dbReference type="GO" id="GO:0006099">
    <property type="term" value="P:tricarboxylic acid cycle"/>
    <property type="evidence" value="ECO:0000315"/>
    <property type="project" value="SGD"/>
</dbReference>
<dbReference type="FunFam" id="3.20.19.10:FF:000002">
    <property type="entry name" value="Aconitate hydratase, mitochondrial"/>
    <property type="match status" value="1"/>
</dbReference>
<dbReference type="FunFam" id="3.30.499.10:FF:000003">
    <property type="entry name" value="Aconitate hydratase, mitochondrial"/>
    <property type="match status" value="1"/>
</dbReference>
<dbReference type="FunFam" id="3.30.499.10:FF:000004">
    <property type="entry name" value="Aconitate hydratase, mitochondrial"/>
    <property type="match status" value="1"/>
</dbReference>
<dbReference type="FunFam" id="3.40.1060.10:FF:000001">
    <property type="entry name" value="Aconitate hydratase, mitochondrial"/>
    <property type="match status" value="1"/>
</dbReference>
<dbReference type="Gene3D" id="3.40.1060.10">
    <property type="entry name" value="Aconitase, Domain 2"/>
    <property type="match status" value="1"/>
</dbReference>
<dbReference type="Gene3D" id="3.30.499.10">
    <property type="entry name" value="Aconitase, domain 3"/>
    <property type="match status" value="2"/>
</dbReference>
<dbReference type="Gene3D" id="3.20.19.10">
    <property type="entry name" value="Aconitase, domain 4"/>
    <property type="match status" value="1"/>
</dbReference>
<dbReference type="InterPro" id="IPR015931">
    <property type="entry name" value="Acnase/IPM_dHydase_lsu_aba_1/3"/>
</dbReference>
<dbReference type="InterPro" id="IPR001030">
    <property type="entry name" value="Acoase/IPM_deHydtase_lsu_aba"/>
</dbReference>
<dbReference type="InterPro" id="IPR015928">
    <property type="entry name" value="Aconitase/3IPM_dehydase_swvl"/>
</dbReference>
<dbReference type="InterPro" id="IPR050926">
    <property type="entry name" value="Aconitase/IPM_isomerase"/>
</dbReference>
<dbReference type="InterPro" id="IPR018136">
    <property type="entry name" value="Aconitase_4Fe-4S_BS"/>
</dbReference>
<dbReference type="InterPro" id="IPR036008">
    <property type="entry name" value="Aconitase_4Fe-4S_dom"/>
</dbReference>
<dbReference type="InterPro" id="IPR015932">
    <property type="entry name" value="Aconitase_dom2"/>
</dbReference>
<dbReference type="InterPro" id="IPR006248">
    <property type="entry name" value="Aconitase_mito-like"/>
</dbReference>
<dbReference type="InterPro" id="IPR000573">
    <property type="entry name" value="AconitaseA/IPMdHydase_ssu_swvl"/>
</dbReference>
<dbReference type="NCBIfam" id="TIGR01340">
    <property type="entry name" value="aconitase_mito"/>
    <property type="match status" value="1"/>
</dbReference>
<dbReference type="NCBIfam" id="NF005558">
    <property type="entry name" value="PRK07229.1"/>
    <property type="match status" value="1"/>
</dbReference>
<dbReference type="PANTHER" id="PTHR43160">
    <property type="entry name" value="ACONITATE HYDRATASE B"/>
    <property type="match status" value="1"/>
</dbReference>
<dbReference type="PANTHER" id="PTHR43160:SF2">
    <property type="entry name" value="HOMOCITRATE DEHYDRATASE, MITOCHONDRIAL"/>
    <property type="match status" value="1"/>
</dbReference>
<dbReference type="Pfam" id="PF00330">
    <property type="entry name" value="Aconitase"/>
    <property type="match status" value="1"/>
</dbReference>
<dbReference type="Pfam" id="PF00694">
    <property type="entry name" value="Aconitase_C"/>
    <property type="match status" value="1"/>
</dbReference>
<dbReference type="PRINTS" id="PR00415">
    <property type="entry name" value="ACONITASE"/>
</dbReference>
<dbReference type="SUPFAM" id="SSF53732">
    <property type="entry name" value="Aconitase iron-sulfur domain"/>
    <property type="match status" value="1"/>
</dbReference>
<dbReference type="SUPFAM" id="SSF52016">
    <property type="entry name" value="LeuD/IlvD-like"/>
    <property type="match status" value="1"/>
</dbReference>
<dbReference type="PROSITE" id="PS00450">
    <property type="entry name" value="ACONITASE_1"/>
    <property type="match status" value="1"/>
</dbReference>
<dbReference type="PROSITE" id="PS01244">
    <property type="entry name" value="ACONITASE_2"/>
    <property type="match status" value="1"/>
</dbReference>
<keyword id="KW-0004">4Fe-4S</keyword>
<keyword id="KW-0028">Amino-acid biosynthesis</keyword>
<keyword id="KW-0408">Iron</keyword>
<keyword id="KW-0411">Iron-sulfur</keyword>
<keyword id="KW-0456">Lyase</keyword>
<keyword id="KW-0457">Lysine biosynthesis</keyword>
<keyword id="KW-0479">Metal-binding</keyword>
<keyword id="KW-0496">Mitochondrion</keyword>
<keyword id="KW-1185">Reference proteome</keyword>
<keyword id="KW-0809">Transit peptide</keyword>
<gene>
    <name type="primary">ACO2</name>
    <name type="ordered locus">YJL200C</name>
    <name type="ORF">J0327</name>
</gene>
<protein>
    <recommendedName>
        <fullName>Homocitrate dehydratase, mitochondrial</fullName>
        <ecNumber>4.2.1.-</ecNumber>
    </recommendedName>
    <alternativeName>
        <fullName>Aconitase 2</fullName>
    </alternativeName>
</protein>
<feature type="transit peptide" description="Mitochondrion" evidence="2">
    <location>
        <begin position="1"/>
        <end position="14"/>
    </location>
</feature>
<feature type="chain" id="PRO_0000076649" description="Homocitrate dehydratase, mitochondrial">
    <location>
        <begin position="15"/>
        <end position="789"/>
    </location>
</feature>
<feature type="binding site" evidence="1">
    <location>
        <position position="96"/>
    </location>
    <ligand>
        <name>substrate</name>
    </ligand>
</feature>
<feature type="binding site" evidence="1">
    <location>
        <begin position="189"/>
        <end position="191"/>
    </location>
    <ligand>
        <name>substrate</name>
    </ligand>
</feature>
<feature type="binding site" evidence="1">
    <location>
        <position position="385"/>
    </location>
    <ligand>
        <name>[4Fe-4S] cluster</name>
        <dbReference type="ChEBI" id="CHEBI:49883"/>
    </ligand>
</feature>
<feature type="binding site" evidence="1">
    <location>
        <position position="448"/>
    </location>
    <ligand>
        <name>[4Fe-4S] cluster</name>
        <dbReference type="ChEBI" id="CHEBI:49883"/>
    </ligand>
</feature>
<feature type="binding site" evidence="1">
    <location>
        <position position="451"/>
    </location>
    <ligand>
        <name>[4Fe-4S] cluster</name>
        <dbReference type="ChEBI" id="CHEBI:49883"/>
    </ligand>
</feature>
<feature type="binding site" evidence="1">
    <location>
        <position position="476"/>
    </location>
    <ligand>
        <name>substrate</name>
    </ligand>
</feature>
<feature type="binding site" evidence="1">
    <location>
        <position position="481"/>
    </location>
    <ligand>
        <name>substrate</name>
    </ligand>
</feature>
<feature type="binding site" evidence="1">
    <location>
        <position position="610"/>
    </location>
    <ligand>
        <name>substrate</name>
    </ligand>
</feature>
<feature type="binding site" evidence="1">
    <location>
        <begin position="672"/>
        <end position="673"/>
    </location>
    <ligand>
        <name>substrate</name>
    </ligand>
</feature>
<feature type="mutagenesis site" description="Reduces catalytic activity towards homoaconitate by 45% and increases the activity towards aconitate by a factor 116." evidence="7">
    <original>K</original>
    <variation>R</variation>
    <location>
        <position position="610"/>
    </location>
</feature>
<proteinExistence type="evidence at protein level"/>
<comment type="function">
    <text evidence="7">Catalyzes the reversible dehydration of (R)-homocitrate to cis-homoaconitate, a step in the alpha-aminoadipate pathway for lysine biosynthesis.</text>
</comment>
<comment type="catalytic activity">
    <reaction>
        <text>(2R)-homocitrate = cis-homoaconitate + H2O</text>
        <dbReference type="Rhea" id="RHEA:26101"/>
        <dbReference type="ChEBI" id="CHEBI:15377"/>
        <dbReference type="ChEBI" id="CHEBI:58174"/>
        <dbReference type="ChEBI" id="CHEBI:58884"/>
    </reaction>
</comment>
<comment type="cofactor">
    <cofactor evidence="1">
        <name>[4Fe-4S] cluster</name>
        <dbReference type="ChEBI" id="CHEBI:49883"/>
    </cofactor>
    <text evidence="1">Binds 1 [4Fe-4S] cluster per subunit.</text>
</comment>
<comment type="pathway">
    <text>Amino-acid biosynthesis; L-lysine biosynthesis via AAA pathway; L-alpha-aminoadipate from 2-oxoglutarate: step 2/5.</text>
</comment>
<comment type="interaction">
    <interactant intactId="EBI-2109">
        <id>P39533</id>
    </interactant>
    <interactant intactId="EBI-2343533">
        <id>P32860</id>
        <label>NFU1</label>
    </interactant>
    <organismsDiffer>false</organismsDiffer>
    <experiments>2</experiments>
</comment>
<comment type="subcellular location">
    <subcellularLocation>
        <location evidence="4 6">Mitochondrion</location>
    </subcellularLocation>
</comment>
<comment type="induction">
    <text evidence="7">Constitutively expressed with a small induction when both glutamate and lysine are missing.</text>
</comment>
<comment type="disruption phenotype">
    <text evidence="3">Has very little effect on growth on nonfermentable carbon sources.</text>
</comment>
<comment type="miscellaneous">
    <text>The fermenting yeast S.cerevisiae has 2 aconitases, ACO1 essential for the citric acid cycle, and ACO2 specifically and exclusively contributing to lysine biosynthesis. In contrast, in respiring filamentous fungi the ACO2 homologs (acoB) seem enzymatically inactive and the ACO1 homolog (acoA) is solely responsible for these functions.</text>
</comment>
<comment type="miscellaneous">
    <text evidence="5">Present with 4670 molecules/cell in log phase SD medium.</text>
</comment>
<comment type="similarity">
    <text evidence="8">Belongs to the aconitase/IPM isomerase family.</text>
</comment>
<organism>
    <name type="scientific">Saccharomyces cerevisiae (strain ATCC 204508 / S288c)</name>
    <name type="common">Baker's yeast</name>
    <dbReference type="NCBI Taxonomy" id="559292"/>
    <lineage>
        <taxon>Eukaryota</taxon>
        <taxon>Fungi</taxon>
        <taxon>Dikarya</taxon>
        <taxon>Ascomycota</taxon>
        <taxon>Saccharomycotina</taxon>
        <taxon>Saccharomycetes</taxon>
        <taxon>Saccharomycetales</taxon>
        <taxon>Saccharomycetaceae</taxon>
        <taxon>Saccharomyces</taxon>
    </lineage>
</organism>
<reference key="1">
    <citation type="journal article" date="1994" name="Yeast">
        <title>The sequence of a 36 kb segment on the left arm of yeast chromosome X identifies 24 open reading frames including NUC1, PRP21 (SPP91), CDC6, CRY2, the gene for S24, a homologue to the aconitase gene ACO1 and two homologues to chromosome III genes.</title>
        <authorList>
            <person name="Purnelle B."/>
            <person name="Coster F."/>
            <person name="Goffeau A."/>
        </authorList>
    </citation>
    <scope>NUCLEOTIDE SEQUENCE [GENOMIC DNA]</scope>
    <source>
        <strain>ATCC 204508 / S288c</strain>
    </source>
</reference>
<reference key="2">
    <citation type="journal article" date="1996" name="EMBO J.">
        <title>Complete nucleotide sequence of Saccharomyces cerevisiae chromosome X.</title>
        <authorList>
            <person name="Galibert F."/>
            <person name="Alexandraki D."/>
            <person name="Baur A."/>
            <person name="Boles E."/>
            <person name="Chalwatzis N."/>
            <person name="Chuat J.-C."/>
            <person name="Coster F."/>
            <person name="Cziepluch C."/>
            <person name="de Haan M."/>
            <person name="Domdey H."/>
            <person name="Durand P."/>
            <person name="Entian K.-D."/>
            <person name="Gatius M."/>
            <person name="Goffeau A."/>
            <person name="Grivell L.A."/>
            <person name="Hennemann A."/>
            <person name="Herbert C.J."/>
            <person name="Heumann K."/>
            <person name="Hilger F."/>
            <person name="Hollenberg C.P."/>
            <person name="Huang M.-E."/>
            <person name="Jacq C."/>
            <person name="Jauniaux J.-C."/>
            <person name="Katsoulou C."/>
            <person name="Kirchrath L."/>
            <person name="Kleine K."/>
            <person name="Kordes E."/>
            <person name="Koetter P."/>
            <person name="Liebl S."/>
            <person name="Louis E.J."/>
            <person name="Manus V."/>
            <person name="Mewes H.-W."/>
            <person name="Miosga T."/>
            <person name="Obermaier B."/>
            <person name="Perea J."/>
            <person name="Pohl T.M."/>
            <person name="Portetelle D."/>
            <person name="Pujol A."/>
            <person name="Purnelle B."/>
            <person name="Ramezani Rad M."/>
            <person name="Rasmussen S.W."/>
            <person name="Rose M."/>
            <person name="Rossau R."/>
            <person name="Schaaff-Gerstenschlaeger I."/>
            <person name="Smits P.H.M."/>
            <person name="Scarcez T."/>
            <person name="Soriano N."/>
            <person name="To Van D."/>
            <person name="Tzermia M."/>
            <person name="Van Broekhoven A."/>
            <person name="Vandenbol M."/>
            <person name="Wedler H."/>
            <person name="von Wettstein D."/>
            <person name="Wambutt R."/>
            <person name="Zagulski M."/>
            <person name="Zollner A."/>
            <person name="Karpfinger-Hartl L."/>
        </authorList>
    </citation>
    <scope>NUCLEOTIDE SEQUENCE [LARGE SCALE GENOMIC DNA]</scope>
    <source>
        <strain>ATCC 204508 / S288c</strain>
    </source>
</reference>
<reference key="3">
    <citation type="journal article" date="2014" name="G3 (Bethesda)">
        <title>The reference genome sequence of Saccharomyces cerevisiae: Then and now.</title>
        <authorList>
            <person name="Engel S.R."/>
            <person name="Dietrich F.S."/>
            <person name="Fisk D.G."/>
            <person name="Binkley G."/>
            <person name="Balakrishnan R."/>
            <person name="Costanzo M.C."/>
            <person name="Dwight S.S."/>
            <person name="Hitz B.C."/>
            <person name="Karra K."/>
            <person name="Nash R.S."/>
            <person name="Weng S."/>
            <person name="Wong E.D."/>
            <person name="Lloyd P."/>
            <person name="Skrzypek M.S."/>
            <person name="Miyasato S.R."/>
            <person name="Simison M."/>
            <person name="Cherry J.M."/>
        </authorList>
    </citation>
    <scope>GENOME REANNOTATION</scope>
    <source>
        <strain>ATCC 204508 / S288c</strain>
    </source>
</reference>
<reference key="4">
    <citation type="journal article" date="1999" name="Genetics">
        <title>Genetic and biochemical interactions involving tricarboxylic acid cycle (TCA) function using a collection of mutants defective in all TCA cycle genes.</title>
        <authorList>
            <person name="Przybyla-Zawislak B."/>
            <person name="Gadde D.M."/>
            <person name="Ducharme K."/>
            <person name="McCammon M.T."/>
        </authorList>
    </citation>
    <scope>DISRUPTION PHENOTYPE</scope>
</reference>
<reference key="5">
    <citation type="journal article" date="2003" name="Nature">
        <title>Global analysis of protein localization in budding yeast.</title>
        <authorList>
            <person name="Huh W.-K."/>
            <person name="Falvo J.V."/>
            <person name="Gerke L.C."/>
            <person name="Carroll A.S."/>
            <person name="Howson R.W."/>
            <person name="Weissman J.S."/>
            <person name="O'Shea E.K."/>
        </authorList>
    </citation>
    <scope>SUBCELLULAR LOCATION [LARGE SCALE ANALYSIS]</scope>
</reference>
<reference key="6">
    <citation type="journal article" date="2003" name="Nature">
        <title>Global analysis of protein expression in yeast.</title>
        <authorList>
            <person name="Ghaemmaghami S."/>
            <person name="Huh W.-K."/>
            <person name="Bower K."/>
            <person name="Howson R.W."/>
            <person name="Belle A."/>
            <person name="Dephoure N."/>
            <person name="O'Shea E.K."/>
            <person name="Weissman J.S."/>
        </authorList>
    </citation>
    <scope>LEVEL OF PROTEIN EXPRESSION [LARGE SCALE ANALYSIS]</scope>
</reference>
<reference key="7">
    <citation type="journal article" date="2003" name="Proc. Natl. Acad. Sci. U.S.A.">
        <title>The proteome of Saccharomyces cerevisiae mitochondria.</title>
        <authorList>
            <person name="Sickmann A."/>
            <person name="Reinders J."/>
            <person name="Wagner Y."/>
            <person name="Joppich C."/>
            <person name="Zahedi R.P."/>
            <person name="Meyer H.E."/>
            <person name="Schoenfisch B."/>
            <person name="Perschil I."/>
            <person name="Chacinska A."/>
            <person name="Guiard B."/>
            <person name="Rehling P."/>
            <person name="Pfanner N."/>
            <person name="Meisinger C."/>
        </authorList>
    </citation>
    <scope>SUBCELLULAR LOCATION [LARGE SCALE ANALYSIS]</scope>
</reference>
<reference key="8">
    <citation type="journal article" date="2012" name="Mol. Microbiol.">
        <title>The fungal alpha-aminoadipate pathway for lysine biosynthesis requires two enzymes of the aconitase family for the isomerization of homocitrate to homoisocitrate.</title>
        <authorList>
            <person name="Fazius F."/>
            <person name="Shelest E."/>
            <person name="Gebhardt P."/>
            <person name="Brock M."/>
        </authorList>
    </citation>
    <scope>FUNCTION</scope>
    <scope>INDUCTION</scope>
    <scope>MUTAGENESIS OF LYS-610</scope>
</reference>
<accession>P39533</accession>
<accession>D6VVZ3</accession>